<keyword id="KW-0067">ATP-binding</keyword>
<keyword id="KW-0342">GTP-binding</keyword>
<keyword id="KW-0547">Nucleotide-binding</keyword>
<name>Y2900_BURVG</name>
<proteinExistence type="inferred from homology"/>
<accession>A4JHY8</accession>
<evidence type="ECO:0000255" key="1">
    <source>
        <dbReference type="HAMAP-Rule" id="MF_00636"/>
    </source>
</evidence>
<evidence type="ECO:0000305" key="2"/>
<gene>
    <name type="ordered locus">Bcep1808_2900</name>
</gene>
<organism>
    <name type="scientific">Burkholderia vietnamiensis (strain G4 / LMG 22486)</name>
    <name type="common">Burkholderia cepacia (strain R1808)</name>
    <dbReference type="NCBI Taxonomy" id="269482"/>
    <lineage>
        <taxon>Bacteria</taxon>
        <taxon>Pseudomonadati</taxon>
        <taxon>Pseudomonadota</taxon>
        <taxon>Betaproteobacteria</taxon>
        <taxon>Burkholderiales</taxon>
        <taxon>Burkholderiaceae</taxon>
        <taxon>Burkholderia</taxon>
        <taxon>Burkholderia cepacia complex</taxon>
    </lineage>
</organism>
<comment type="function">
    <text evidence="1">Displays ATPase and GTPase activities.</text>
</comment>
<comment type="similarity">
    <text evidence="1">Belongs to the RapZ-like family.</text>
</comment>
<comment type="sequence caution" evidence="2">
    <conflict type="erroneous initiation">
        <sequence resource="EMBL-CDS" id="ABO55891"/>
    </conflict>
</comment>
<sequence length="302" mass="33776">MRIVLITGISGSGKSVALNALEDAGYYCVDNLPPHVLPELARYLAEEGQHRLAVAIDARSSASLDEMPGLIRALSLEHDVRVLFLNASTQSLIQRFSETRRRHPLSGSPSHDANVGLLSSLEEAIERERELVAPLAEFGHQIDTSTLRANVLRTWVKRFIEQKNNDLMVMFESFGFKRGVPLDADLMFDVRALPNPYYDHELRPLTGLDQPVIAFLDALPIVHQMIDDIHAFLMKWLPHFREDNRSYLTVAIGCTGGQHRSVFIAETLAARLAHDANVIVRHRDAPVDVDASSRLVADVHRP</sequence>
<protein>
    <recommendedName>
        <fullName evidence="1">Nucleotide-binding protein Bcep1808_2900</fullName>
    </recommendedName>
</protein>
<reference key="1">
    <citation type="submission" date="2007-03" db="EMBL/GenBank/DDBJ databases">
        <title>Complete sequence of chromosome 1 of Burkholderia vietnamiensis G4.</title>
        <authorList>
            <consortium name="US DOE Joint Genome Institute"/>
            <person name="Copeland A."/>
            <person name="Lucas S."/>
            <person name="Lapidus A."/>
            <person name="Barry K."/>
            <person name="Detter J.C."/>
            <person name="Glavina del Rio T."/>
            <person name="Hammon N."/>
            <person name="Israni S."/>
            <person name="Dalin E."/>
            <person name="Tice H."/>
            <person name="Pitluck S."/>
            <person name="Chain P."/>
            <person name="Malfatti S."/>
            <person name="Shin M."/>
            <person name="Vergez L."/>
            <person name="Schmutz J."/>
            <person name="Larimer F."/>
            <person name="Land M."/>
            <person name="Hauser L."/>
            <person name="Kyrpides N."/>
            <person name="Tiedje J."/>
            <person name="Richardson P."/>
        </authorList>
    </citation>
    <scope>NUCLEOTIDE SEQUENCE [LARGE SCALE GENOMIC DNA]</scope>
    <source>
        <strain>G4 / LMG 22486</strain>
    </source>
</reference>
<feature type="chain" id="PRO_0000383224" description="Nucleotide-binding protein Bcep1808_2900">
    <location>
        <begin position="1"/>
        <end position="302"/>
    </location>
</feature>
<feature type="binding site" evidence="1">
    <location>
        <begin position="8"/>
        <end position="15"/>
    </location>
    <ligand>
        <name>ATP</name>
        <dbReference type="ChEBI" id="CHEBI:30616"/>
    </ligand>
</feature>
<feature type="binding site" evidence="1">
    <location>
        <begin position="57"/>
        <end position="60"/>
    </location>
    <ligand>
        <name>GTP</name>
        <dbReference type="ChEBI" id="CHEBI:37565"/>
    </ligand>
</feature>
<dbReference type="EMBL" id="CP000614">
    <property type="protein sequence ID" value="ABO55891.1"/>
    <property type="status" value="ALT_INIT"/>
    <property type="molecule type" value="Genomic_DNA"/>
</dbReference>
<dbReference type="SMR" id="A4JHY8"/>
<dbReference type="KEGG" id="bvi:Bcep1808_2900"/>
<dbReference type="eggNOG" id="COG1660">
    <property type="taxonomic scope" value="Bacteria"/>
</dbReference>
<dbReference type="HOGENOM" id="CLU_059558_1_1_4"/>
<dbReference type="Proteomes" id="UP000002287">
    <property type="component" value="Chromosome 1"/>
</dbReference>
<dbReference type="GO" id="GO:0005524">
    <property type="term" value="F:ATP binding"/>
    <property type="evidence" value="ECO:0007669"/>
    <property type="project" value="UniProtKB-UniRule"/>
</dbReference>
<dbReference type="GO" id="GO:0005525">
    <property type="term" value="F:GTP binding"/>
    <property type="evidence" value="ECO:0007669"/>
    <property type="project" value="UniProtKB-UniRule"/>
</dbReference>
<dbReference type="Gene3D" id="3.40.50.300">
    <property type="entry name" value="P-loop containing nucleotide triphosphate hydrolases"/>
    <property type="match status" value="1"/>
</dbReference>
<dbReference type="HAMAP" id="MF_00636">
    <property type="entry name" value="RapZ_like"/>
    <property type="match status" value="1"/>
</dbReference>
<dbReference type="InterPro" id="IPR027417">
    <property type="entry name" value="P-loop_NTPase"/>
</dbReference>
<dbReference type="InterPro" id="IPR005337">
    <property type="entry name" value="RapZ-like"/>
</dbReference>
<dbReference type="InterPro" id="IPR053930">
    <property type="entry name" value="RapZ-like_N"/>
</dbReference>
<dbReference type="InterPro" id="IPR053931">
    <property type="entry name" value="RapZ_C"/>
</dbReference>
<dbReference type="NCBIfam" id="NF003828">
    <property type="entry name" value="PRK05416.1"/>
    <property type="match status" value="1"/>
</dbReference>
<dbReference type="PANTHER" id="PTHR30448">
    <property type="entry name" value="RNASE ADAPTER PROTEIN RAPZ"/>
    <property type="match status" value="1"/>
</dbReference>
<dbReference type="PANTHER" id="PTHR30448:SF0">
    <property type="entry name" value="RNASE ADAPTER PROTEIN RAPZ"/>
    <property type="match status" value="1"/>
</dbReference>
<dbReference type="Pfam" id="PF22740">
    <property type="entry name" value="PapZ_C"/>
    <property type="match status" value="1"/>
</dbReference>
<dbReference type="Pfam" id="PF03668">
    <property type="entry name" value="RapZ-like_N"/>
    <property type="match status" value="1"/>
</dbReference>
<dbReference type="PIRSF" id="PIRSF005052">
    <property type="entry name" value="P-loopkin"/>
    <property type="match status" value="1"/>
</dbReference>
<dbReference type="SUPFAM" id="SSF52540">
    <property type="entry name" value="P-loop containing nucleoside triphosphate hydrolases"/>
    <property type="match status" value="1"/>
</dbReference>